<dbReference type="EMBL" id="M35700">
    <property type="protein sequence ID" value="AAA18897.2"/>
    <property type="molecule type" value="Genomic_DNA"/>
</dbReference>
<dbReference type="EMBL" id="M35701">
    <property type="protein sequence ID" value="AAA31624.1"/>
    <property type="molecule type" value="Genomic_DNA"/>
</dbReference>
<dbReference type="EMBL" id="M35702">
    <property type="protein sequence ID" value="AAA31625.1"/>
    <property type="molecule type" value="Genomic_DNA"/>
</dbReference>
<dbReference type="PIR" id="G23725">
    <property type="entry name" value="G23725"/>
</dbReference>
<dbReference type="SMR" id="P21721"/>
<dbReference type="GO" id="GO:0005743">
    <property type="term" value="C:mitochondrial inner membrane"/>
    <property type="evidence" value="ECO:0007669"/>
    <property type="project" value="UniProtKB-SubCell"/>
</dbReference>
<dbReference type="GO" id="GO:0045275">
    <property type="term" value="C:respiratory chain complex III"/>
    <property type="evidence" value="ECO:0007669"/>
    <property type="project" value="InterPro"/>
</dbReference>
<dbReference type="GO" id="GO:0046872">
    <property type="term" value="F:metal ion binding"/>
    <property type="evidence" value="ECO:0007669"/>
    <property type="project" value="UniProtKB-KW"/>
</dbReference>
<dbReference type="GO" id="GO:0008121">
    <property type="term" value="F:ubiquinol-cytochrome-c reductase activity"/>
    <property type="evidence" value="ECO:0007669"/>
    <property type="project" value="InterPro"/>
</dbReference>
<dbReference type="GO" id="GO:0006122">
    <property type="term" value="P:mitochondrial electron transport, ubiquinol to cytochrome c"/>
    <property type="evidence" value="ECO:0007669"/>
    <property type="project" value="TreeGrafter"/>
</dbReference>
<dbReference type="CDD" id="cd00290">
    <property type="entry name" value="cytochrome_b_C"/>
    <property type="match status" value="1"/>
</dbReference>
<dbReference type="CDD" id="cd00284">
    <property type="entry name" value="Cytochrome_b_N"/>
    <property type="match status" value="1"/>
</dbReference>
<dbReference type="FunFam" id="1.20.810.10:FF:000002">
    <property type="entry name" value="Cytochrome b"/>
    <property type="match status" value="1"/>
</dbReference>
<dbReference type="Gene3D" id="1.20.810.10">
    <property type="entry name" value="Cytochrome Bc1 Complex, Chain C"/>
    <property type="match status" value="1"/>
</dbReference>
<dbReference type="InterPro" id="IPR005798">
    <property type="entry name" value="Cyt_b/b6_C"/>
</dbReference>
<dbReference type="InterPro" id="IPR036150">
    <property type="entry name" value="Cyt_b/b6_C_sf"/>
</dbReference>
<dbReference type="InterPro" id="IPR005797">
    <property type="entry name" value="Cyt_b/b6_N"/>
</dbReference>
<dbReference type="InterPro" id="IPR027387">
    <property type="entry name" value="Cytb/b6-like_sf"/>
</dbReference>
<dbReference type="InterPro" id="IPR030689">
    <property type="entry name" value="Cytochrome_b"/>
</dbReference>
<dbReference type="InterPro" id="IPR048260">
    <property type="entry name" value="Cytochrome_b_C_euk/bac"/>
</dbReference>
<dbReference type="InterPro" id="IPR048259">
    <property type="entry name" value="Cytochrome_b_N_euk/bac"/>
</dbReference>
<dbReference type="InterPro" id="IPR016174">
    <property type="entry name" value="Di-haem_cyt_TM"/>
</dbReference>
<dbReference type="PANTHER" id="PTHR19271">
    <property type="entry name" value="CYTOCHROME B"/>
    <property type="match status" value="1"/>
</dbReference>
<dbReference type="PANTHER" id="PTHR19271:SF16">
    <property type="entry name" value="CYTOCHROME B"/>
    <property type="match status" value="1"/>
</dbReference>
<dbReference type="Pfam" id="PF00032">
    <property type="entry name" value="Cytochrom_B_C"/>
    <property type="match status" value="1"/>
</dbReference>
<dbReference type="Pfam" id="PF00033">
    <property type="entry name" value="Cytochrome_B"/>
    <property type="match status" value="1"/>
</dbReference>
<dbReference type="PIRSF" id="PIRSF038885">
    <property type="entry name" value="COB"/>
    <property type="match status" value="1"/>
</dbReference>
<dbReference type="SUPFAM" id="SSF81648">
    <property type="entry name" value="a domain/subunit of cytochrome bc1 complex (Ubiquinol-cytochrome c reductase)"/>
    <property type="match status" value="1"/>
</dbReference>
<dbReference type="SUPFAM" id="SSF81342">
    <property type="entry name" value="Transmembrane di-heme cytochromes"/>
    <property type="match status" value="1"/>
</dbReference>
<dbReference type="PROSITE" id="PS51003">
    <property type="entry name" value="CYTB_CTER"/>
    <property type="match status" value="1"/>
</dbReference>
<dbReference type="PROSITE" id="PS51002">
    <property type="entry name" value="CYTB_NTER"/>
    <property type="match status" value="1"/>
</dbReference>
<evidence type="ECO:0000250" key="1"/>
<evidence type="ECO:0000250" key="2">
    <source>
        <dbReference type="UniProtKB" id="P00157"/>
    </source>
</evidence>
<evidence type="ECO:0000255" key="3">
    <source>
        <dbReference type="PROSITE-ProRule" id="PRU00967"/>
    </source>
</evidence>
<evidence type="ECO:0000255" key="4">
    <source>
        <dbReference type="PROSITE-ProRule" id="PRU00968"/>
    </source>
</evidence>
<reference key="1">
    <citation type="submission" date="1999-07" db="EMBL/GenBank/DDBJ databases">
        <authorList>
            <person name="Smith M.F."/>
        </authorList>
    </citation>
    <scope>NUCLEOTIDE SEQUENCE [GENOMIC DNA]</scope>
    <source>
        <tissue>Liver</tissue>
    </source>
</reference>
<reference key="2">
    <citation type="journal article" date="1993" name="Biol. J. Linn. Soc. Lond.">
        <title>The diversification of South American murid rodents: evidence from mitochondrial DNA sequence data for the akodontine tribe.</title>
        <authorList>
            <person name="Smith M.F."/>
            <person name="Patton J.L."/>
        </authorList>
    </citation>
    <scope>NUCLEOTIDE SEQUENCE [GENOMIC DNA] OF 1-267</scope>
    <source>
        <tissue>Liver</tissue>
    </source>
</reference>
<reference key="3">
    <citation type="journal article" date="1991" name="Mol. Biol. Evol.">
        <title>Variation in mitochondrial cytochrome b sequence in natural populations of South American akodontine rodents (Muridae: Sigmodontinae).</title>
        <authorList>
            <person name="Smith M.F."/>
            <person name="Patton J.L."/>
        </authorList>
    </citation>
    <scope>NUCLEOTIDE SEQUENCE [GENOMIC DNA] OF 1-133</scope>
    <source>
        <strain>Isolate MVZ 171720</strain>
        <strain>Isolate MVZ 171721</strain>
        <strain>Isolate MVZ 174053</strain>
        <strain>Isolate MVZ 174054</strain>
        <tissue>Liver</tissue>
    </source>
</reference>
<keyword id="KW-0249">Electron transport</keyword>
<keyword id="KW-0349">Heme</keyword>
<keyword id="KW-0408">Iron</keyword>
<keyword id="KW-0472">Membrane</keyword>
<keyword id="KW-0479">Metal-binding</keyword>
<keyword id="KW-0496">Mitochondrion</keyword>
<keyword id="KW-0999">Mitochondrion inner membrane</keyword>
<keyword id="KW-0679">Respiratory chain</keyword>
<keyword id="KW-0812">Transmembrane</keyword>
<keyword id="KW-1133">Transmembrane helix</keyword>
<keyword id="KW-0813">Transport</keyword>
<keyword id="KW-0830">Ubiquinone</keyword>
<sequence>MKILRKNHPLLKIVNHSFIDLPTPSNISSWWNFGSLLGVCLMIQILTGLFLAMHYTSDTTTAFSSVAHICRDVNYGWLIRYLHANGASMFFICLFIHVGRGIYYGSYVLSETWNVGIILFLTTMATAFVGYVLPWGQMSFWGATVITNLLSAIPYIGSTLVEWIWGGFSVDKATLTRFFAFHFILPFIITAFALVHLLFLHETGSNNPSGLNSDSDKIPFHPYYTIKDLLGIFLLLLVLMILALFFPDVLGDPDNFTPANPLNTPAHIKPEWYFLFAYAILRSIPNKLGGVLALILSILILAAFPLLNTSKQHGLIFRPVTQTIYWTFIANLLVLTWIGGQPVEYPFTMIGQIASITYFTIIIILMPVSNTIENNIIKL</sequence>
<name>CYB_AKOTO</name>
<proteinExistence type="inferred from homology"/>
<gene>
    <name type="primary">MT-CYB</name>
    <name type="synonym">COB</name>
    <name type="synonym">CYTB</name>
    <name type="synonym">MTCYB</name>
</gene>
<organism>
    <name type="scientific">Akodon torques</name>
    <name type="common">Cloud forest grass mouse</name>
    <dbReference type="NCBI Taxonomy" id="10078"/>
    <lineage>
        <taxon>Eukaryota</taxon>
        <taxon>Metazoa</taxon>
        <taxon>Chordata</taxon>
        <taxon>Craniata</taxon>
        <taxon>Vertebrata</taxon>
        <taxon>Euteleostomi</taxon>
        <taxon>Mammalia</taxon>
        <taxon>Eutheria</taxon>
        <taxon>Euarchontoglires</taxon>
        <taxon>Glires</taxon>
        <taxon>Rodentia</taxon>
        <taxon>Myomorpha</taxon>
        <taxon>Muroidea</taxon>
        <taxon>Cricetidae</taxon>
        <taxon>Sigmodontinae</taxon>
        <taxon>Akodon</taxon>
    </lineage>
</organism>
<feature type="chain" id="PRO_0000060557" description="Cytochrome b">
    <location>
        <begin position="1"/>
        <end position="379"/>
    </location>
</feature>
<feature type="transmembrane region" description="Helical" evidence="2">
    <location>
        <begin position="33"/>
        <end position="53"/>
    </location>
</feature>
<feature type="transmembrane region" description="Helical" evidence="2">
    <location>
        <begin position="77"/>
        <end position="98"/>
    </location>
</feature>
<feature type="transmembrane region" description="Helical" evidence="2">
    <location>
        <begin position="113"/>
        <end position="133"/>
    </location>
</feature>
<feature type="transmembrane region" description="Helical" evidence="2">
    <location>
        <begin position="178"/>
        <end position="198"/>
    </location>
</feature>
<feature type="transmembrane region" description="Helical" evidence="2">
    <location>
        <begin position="226"/>
        <end position="246"/>
    </location>
</feature>
<feature type="transmembrane region" description="Helical" evidence="2">
    <location>
        <begin position="288"/>
        <end position="308"/>
    </location>
</feature>
<feature type="transmembrane region" description="Helical" evidence="2">
    <location>
        <begin position="320"/>
        <end position="340"/>
    </location>
</feature>
<feature type="transmembrane region" description="Helical" evidence="2">
    <location>
        <begin position="347"/>
        <end position="367"/>
    </location>
</feature>
<feature type="binding site" description="axial binding residue" evidence="2">
    <location>
        <position position="83"/>
    </location>
    <ligand>
        <name>heme b</name>
        <dbReference type="ChEBI" id="CHEBI:60344"/>
        <label>b562</label>
    </ligand>
    <ligandPart>
        <name>Fe</name>
        <dbReference type="ChEBI" id="CHEBI:18248"/>
    </ligandPart>
</feature>
<feature type="binding site" description="axial binding residue" evidence="2">
    <location>
        <position position="97"/>
    </location>
    <ligand>
        <name>heme b</name>
        <dbReference type="ChEBI" id="CHEBI:60344"/>
        <label>b566</label>
    </ligand>
    <ligandPart>
        <name>Fe</name>
        <dbReference type="ChEBI" id="CHEBI:18248"/>
    </ligandPart>
</feature>
<feature type="binding site" description="axial binding residue" evidence="2">
    <location>
        <position position="182"/>
    </location>
    <ligand>
        <name>heme b</name>
        <dbReference type="ChEBI" id="CHEBI:60344"/>
        <label>b562</label>
    </ligand>
    <ligandPart>
        <name>Fe</name>
        <dbReference type="ChEBI" id="CHEBI:18248"/>
    </ligandPart>
</feature>
<feature type="binding site" description="axial binding residue" evidence="2">
    <location>
        <position position="196"/>
    </location>
    <ligand>
        <name>heme b</name>
        <dbReference type="ChEBI" id="CHEBI:60344"/>
        <label>b566</label>
    </ligand>
    <ligandPart>
        <name>Fe</name>
        <dbReference type="ChEBI" id="CHEBI:18248"/>
    </ligandPart>
</feature>
<feature type="binding site" evidence="2">
    <location>
        <position position="201"/>
    </location>
    <ligand>
        <name>a ubiquinone</name>
        <dbReference type="ChEBI" id="CHEBI:16389"/>
    </ligand>
</feature>
<feature type="sequence variant" description="In strain: Isolate MVZ 174053 and Isolate MVZ 174054.">
    <original>V</original>
    <variation>A</variation>
    <location>
        <position position="108"/>
    </location>
</feature>
<feature type="sequence variant" description="In strain: Isolate MVZ 174053 and Isolate MVZ 174054.">
    <original>V</original>
    <variation>I</variation>
    <location>
        <position position="115"/>
    </location>
</feature>
<comment type="function">
    <text evidence="2">Component of the ubiquinol-cytochrome c reductase complex (complex III or cytochrome b-c1 complex) that is part of the mitochondrial respiratory chain. The b-c1 complex mediates electron transfer from ubiquinol to cytochrome c. Contributes to the generation of a proton gradient across the mitochondrial membrane that is then used for ATP synthesis.</text>
</comment>
<comment type="cofactor">
    <cofactor evidence="2">
        <name>heme b</name>
        <dbReference type="ChEBI" id="CHEBI:60344"/>
    </cofactor>
    <text evidence="2">Binds 2 heme b groups non-covalently.</text>
</comment>
<comment type="subunit">
    <text evidence="2">The cytochrome bc1 complex contains 11 subunits: 3 respiratory subunits (MT-CYB, CYC1 and UQCRFS1), 2 core proteins (UQCRC1 and UQCRC2) and 6 low-molecular weight proteins (UQCRH/QCR6, UQCRB/QCR7, UQCRQ/QCR8, UQCR10/QCR9, UQCR11/QCR10 and a cleavage product of UQCRFS1). This cytochrome bc1 complex then forms a dimer.</text>
</comment>
<comment type="subcellular location">
    <subcellularLocation>
        <location evidence="2">Mitochondrion inner membrane</location>
        <topology evidence="2">Multi-pass membrane protein</topology>
    </subcellularLocation>
</comment>
<comment type="miscellaneous">
    <text evidence="1">Heme 1 (or BL or b562) is low-potential and absorbs at about 562 nm, and heme 2 (or BH or b566) is high-potential and absorbs at about 566 nm.</text>
</comment>
<comment type="similarity">
    <text evidence="3 4">Belongs to the cytochrome b family.</text>
</comment>
<comment type="caution">
    <text evidence="2">The full-length protein contains only eight transmembrane helices, not nine as predicted by bioinformatics tools.</text>
</comment>
<geneLocation type="mitochondrion"/>
<protein>
    <recommendedName>
        <fullName>Cytochrome b</fullName>
    </recommendedName>
    <alternativeName>
        <fullName>Complex III subunit 3</fullName>
    </alternativeName>
    <alternativeName>
        <fullName>Complex III subunit III</fullName>
    </alternativeName>
    <alternativeName>
        <fullName>Cytochrome b-c1 complex subunit 3</fullName>
    </alternativeName>
    <alternativeName>
        <fullName>Ubiquinol-cytochrome-c reductase complex cytochrome b subunit</fullName>
    </alternativeName>
</protein>
<accession>P21721</accession>